<evidence type="ECO:0000255" key="1"/>
<evidence type="ECO:0000255" key="2">
    <source>
        <dbReference type="PROSITE-ProRule" id="PRU00147"/>
    </source>
</evidence>
<evidence type="ECO:0000256" key="3">
    <source>
        <dbReference type="SAM" id="MobiDB-lite"/>
    </source>
</evidence>
<evidence type="ECO:0000269" key="4">
    <source>
    </source>
</evidence>
<evidence type="ECO:0000269" key="5">
    <source>
    </source>
</evidence>
<evidence type="ECO:0000269" key="6">
    <source>
    </source>
</evidence>
<evidence type="ECO:0000269" key="7">
    <source>
    </source>
</evidence>
<evidence type="ECO:0000269" key="8">
    <source>
    </source>
</evidence>
<evidence type="ECO:0000269" key="9">
    <source>
    </source>
</evidence>
<evidence type="ECO:0000269" key="10">
    <source>
    </source>
</evidence>
<evidence type="ECO:0000269" key="11">
    <source>
    </source>
</evidence>
<evidence type="ECO:0000269" key="12">
    <source>
    </source>
</evidence>
<evidence type="ECO:0000269" key="13">
    <source>
    </source>
</evidence>
<evidence type="ECO:0000269" key="14">
    <source>
    </source>
</evidence>
<evidence type="ECO:0000303" key="15">
    <source>
    </source>
</evidence>
<evidence type="ECO:0000303" key="16">
    <source>
    </source>
</evidence>
<evidence type="ECO:0000305" key="17"/>
<evidence type="ECO:0007744" key="18">
    <source>
        <dbReference type="PDB" id="7X4O"/>
    </source>
</evidence>
<evidence type="ECO:0007744" key="19">
    <source>
    </source>
</evidence>
<evidence type="ECO:0007744" key="20">
    <source>
    </source>
</evidence>
<evidence type="ECO:0007829" key="21">
    <source>
        <dbReference type="PDB" id="7X4O"/>
    </source>
</evidence>
<keyword id="KW-0002">3D-structure</keyword>
<keyword id="KW-0175">Coiled coil</keyword>
<keyword id="KW-0472">Membrane</keyword>
<keyword id="KW-0597">Phosphoprotein</keyword>
<keyword id="KW-0653">Protein transport</keyword>
<keyword id="KW-1185">Reference proteome</keyword>
<keyword id="KW-0813">Transport</keyword>
<protein>
    <recommendedName>
        <fullName evidence="16">Vacuolar protein sorting-associated protein 17</fullName>
    </recommendedName>
    <alternativeName>
        <fullName>Carboxypeptidase Y-deficient protein 21</fullName>
    </alternativeName>
    <alternativeName>
        <fullName evidence="15">Vacuolar protein targeting protein 3</fullName>
    </alternativeName>
</protein>
<gene>
    <name evidence="16" type="primary">VPS17</name>
    <name type="synonym">PEP21</name>
    <name evidence="15" type="synonym">VPT3</name>
    <name type="ordered locus">YOR132W</name>
    <name type="ORF">O3314</name>
    <name type="ORF">YOR3314W</name>
</gene>
<feature type="chain" id="PRO_0000065892" description="Vacuolar protein sorting-associated protein 17">
    <location>
        <begin position="1"/>
        <end position="551"/>
    </location>
</feature>
<feature type="domain" description="PX" evidence="2 10">
    <location>
        <begin position="108"/>
        <end position="227"/>
    </location>
</feature>
<feature type="region of interest" description="Disordered" evidence="3">
    <location>
        <begin position="1"/>
        <end position="100"/>
    </location>
</feature>
<feature type="region of interest" description="Disordered" evidence="3">
    <location>
        <begin position="474"/>
        <end position="504"/>
    </location>
</feature>
<feature type="coiled-coil region" evidence="1">
    <location>
        <begin position="359"/>
        <end position="385"/>
    </location>
</feature>
<feature type="compositionally biased region" description="Polar residues" evidence="3">
    <location>
        <begin position="29"/>
        <end position="39"/>
    </location>
</feature>
<feature type="compositionally biased region" description="Polar residues" evidence="3">
    <location>
        <begin position="46"/>
        <end position="64"/>
    </location>
</feature>
<feature type="compositionally biased region" description="Polar residues" evidence="3">
    <location>
        <begin position="480"/>
        <end position="504"/>
    </location>
</feature>
<feature type="modified residue" description="Phosphoserine" evidence="19 20">
    <location>
        <position position="544"/>
    </location>
</feature>
<feature type="sequence conflict" description="In Ref. 1; AAA35213." evidence="17" ref="1">
    <original>D</original>
    <variation>G</variation>
    <location>
        <position position="25"/>
    </location>
</feature>
<feature type="sequence conflict" description="In Ref. 1; AAA35213." evidence="17" ref="1">
    <original>A</original>
    <variation>T</variation>
    <location>
        <position position="30"/>
    </location>
</feature>
<feature type="sequence conflict" description="In Ref. 1; AAA35213." evidence="17" ref="1">
    <original>I</original>
    <variation>V</variation>
    <location>
        <position position="62"/>
    </location>
</feature>
<feature type="sequence conflict" description="In Ref. 1; AAA35213." evidence="17" ref="1">
    <original>E</original>
    <variation>G</variation>
    <location>
        <position position="68"/>
    </location>
</feature>
<feature type="sequence conflict" description="In Ref. 1; AAA35213." evidence="17" ref="1">
    <original>P</original>
    <variation>S</variation>
    <location>
        <position position="90"/>
    </location>
</feature>
<feature type="sequence conflict" description="In Ref. 1; AAA35213." evidence="17" ref="1">
    <original>A</original>
    <variation>T</variation>
    <location>
        <position position="402"/>
    </location>
</feature>
<feature type="strand" evidence="21">
    <location>
        <begin position="108"/>
        <end position="116"/>
    </location>
</feature>
<feature type="strand" evidence="21">
    <location>
        <begin position="129"/>
        <end position="136"/>
    </location>
</feature>
<feature type="strand" evidence="21">
    <location>
        <begin position="144"/>
        <end position="152"/>
    </location>
</feature>
<feature type="helix" evidence="21">
    <location>
        <begin position="153"/>
        <end position="166"/>
    </location>
</feature>
<feature type="helix" evidence="21">
    <location>
        <begin position="178"/>
        <end position="182"/>
    </location>
</feature>
<feature type="helix" evidence="21">
    <location>
        <begin position="187"/>
        <end position="205"/>
    </location>
</feature>
<feature type="helix" evidence="21">
    <location>
        <begin position="208"/>
        <end position="211"/>
    </location>
</feature>
<feature type="helix" evidence="21">
    <location>
        <begin position="214"/>
        <end position="221"/>
    </location>
</feature>
<comment type="function">
    <text evidence="4 8 9 11 12 13 14">Component of the membrane-associated retromer complex which is essential in endosome-to-Golgi retrograde transport (PubMed:12181349, PubMed:9700157). The VPS5-VPS17 subcomplex may assemble onto the membrane to promote vesicle formation and is required for recycling the vacuolar protein-sorting receptor (PubMed:9285823, PubMed:9700157). Required for the sorting and delivery of a subset of soluble vacuolar hydrolases (PubMed:3062374, PubMed:3538017, PubMed:8416961). Required for retention of late Golgi membrane proteins and vacuolar biogenesis (PubMed:9700157). Involved in vacuolar fragmentation during hyperosmotic stress (PubMed:35574911).</text>
</comment>
<comment type="subunit">
    <text evidence="4 11 13 14">Component of the retromer complex which consists of VPS29, VPS26, VPS35, VPS5 and VPS17 (PubMed:35574911, PubMed:9700157). Component of a retromer subcomplex consisting of VPS5 and VPS17 (PubMed:12181349, PubMed:35574911, PubMed:9285823, PubMed:9700157).</text>
</comment>
<comment type="interaction">
    <interactant intactId="EBI-20366">
        <id>P32913</id>
    </interactant>
    <interactant intactId="EBI-20373">
        <id>P40335</id>
        <label>PEP8</label>
    </interactant>
    <organismsDiffer>false</organismsDiffer>
    <experiments>3</experiments>
</comment>
<comment type="interaction">
    <interactant intactId="EBI-20366">
        <id>P32913</id>
    </interactant>
    <interactant intactId="EBI-13092">
        <id>P38759</id>
        <label>VPS29</label>
    </interactant>
    <organismsDiffer>false</organismsDiffer>
    <experiments>3</experiments>
</comment>
<comment type="interaction">
    <interactant intactId="EBI-20366">
        <id>P32913</id>
    </interactant>
    <interactant intactId="EBI-20415">
        <id>P34110</id>
        <label>VPS35</label>
    </interactant>
    <organismsDiffer>false</organismsDiffer>
    <experiments>4</experiments>
</comment>
<comment type="interaction">
    <interactant intactId="EBI-20366">
        <id>P32913</id>
    </interactant>
    <interactant intactId="EBI-20483">
        <id>Q92331</id>
        <label>VPS5</label>
    </interactant>
    <organismsDiffer>false</organismsDiffer>
    <experiments>8</experiments>
</comment>
<comment type="interaction">
    <interactant intactId="EBI-20366">
        <id>P32913</id>
    </interactant>
    <interactant intactId="EBI-28230">
        <id>P53845</id>
        <label>YIF1</label>
    </interactant>
    <organismsDiffer>false</organismsDiffer>
    <experiments>2</experiments>
</comment>
<comment type="interaction">
    <interactant intactId="EBI-20366">
        <id>P32913</id>
    </interactant>
    <interactant intactId="EBI-25295">
        <id>P53039</id>
        <label>YIP1</label>
    </interactant>
    <organismsDiffer>false</organismsDiffer>
    <experiments>2</experiments>
</comment>
<comment type="subcellular location">
    <subcellularLocation>
        <location evidence="14">Endomembrane system</location>
        <topology evidence="14">Peripheral membrane protein</topology>
        <orientation evidence="14">Cytoplasmic side</orientation>
    </subcellularLocation>
    <text evidence="14">Membrane-associated on the cytoplasmic side of either the Golgi complex or an intermediate in Golgi to vacuole transport.</text>
</comment>
<comment type="domain">
    <text evidence="4">The C-terminal half, which contain the coiled-coils domains, is necessary and sufficient for interaction with VPS5.</text>
</comment>
<comment type="PTM">
    <text evidence="6 7">Phosphorylated on one or more serine residues.</text>
</comment>
<comment type="disruption phenotype">
    <text evidence="11">Leads to hyper-fragmentation of the vacuoles upon hyperosmotic stress.</text>
</comment>
<comment type="miscellaneous">
    <text evidence="5">Present with 7380 molecules/cell in log phase SD medium.</text>
</comment>
<comment type="similarity">
    <text evidence="17">Belongs to the VPS17 family.</text>
</comment>
<accession>P32913</accession>
<accession>D6W2J0</accession>
<accession>Q12279</accession>
<dbReference type="EMBL" id="L02869">
    <property type="protein sequence ID" value="AAA35213.1"/>
    <property type="molecule type" value="Genomic_DNA"/>
</dbReference>
<dbReference type="EMBL" id="X94335">
    <property type="protein sequence ID" value="CAA64051.1"/>
    <property type="molecule type" value="Genomic_DNA"/>
</dbReference>
<dbReference type="EMBL" id="X90518">
    <property type="protein sequence ID" value="CAA62115.1"/>
    <property type="molecule type" value="Genomic_DNA"/>
</dbReference>
<dbReference type="EMBL" id="Z75040">
    <property type="protein sequence ID" value="CAA99331.1"/>
    <property type="molecule type" value="Genomic_DNA"/>
</dbReference>
<dbReference type="EMBL" id="BK006948">
    <property type="protein sequence ID" value="DAA10906.1"/>
    <property type="molecule type" value="Genomic_DNA"/>
</dbReference>
<dbReference type="PIR" id="S60994">
    <property type="entry name" value="S60994"/>
</dbReference>
<dbReference type="RefSeq" id="NP_014775.3">
    <property type="nucleotide sequence ID" value="NM_001183551.3"/>
</dbReference>
<dbReference type="PDB" id="7X4O">
    <property type="method" value="X-ray"/>
    <property type="resolution" value="2.02 A"/>
    <property type="chains" value="A/B=100-234"/>
</dbReference>
<dbReference type="PDBsum" id="7X4O"/>
<dbReference type="SMR" id="P32913"/>
<dbReference type="BioGRID" id="34528">
    <property type="interactions" value="509"/>
</dbReference>
<dbReference type="ComplexPortal" id="CPX-1653">
    <property type="entry name" value="Retromer complex"/>
</dbReference>
<dbReference type="DIP" id="DIP-1739N"/>
<dbReference type="FunCoup" id="P32913">
    <property type="interactions" value="122"/>
</dbReference>
<dbReference type="IntAct" id="P32913">
    <property type="interactions" value="18"/>
</dbReference>
<dbReference type="MINT" id="P32913"/>
<dbReference type="STRING" id="4932.YOR132W"/>
<dbReference type="TCDB" id="9.A.63.1.1">
    <property type="family name" value="the retromer-dependent vacuolar protein sorting (r-vps) family"/>
</dbReference>
<dbReference type="GlyGen" id="P32913">
    <property type="glycosylation" value="1 site, 1 O-linked glycan (1 site)"/>
</dbReference>
<dbReference type="iPTMnet" id="P32913"/>
<dbReference type="PaxDb" id="4932-YOR132W"/>
<dbReference type="PeptideAtlas" id="P32913"/>
<dbReference type="EnsemblFungi" id="YOR132W_mRNA">
    <property type="protein sequence ID" value="YOR132W"/>
    <property type="gene ID" value="YOR132W"/>
</dbReference>
<dbReference type="GeneID" id="854300"/>
<dbReference type="KEGG" id="sce:YOR132W"/>
<dbReference type="AGR" id="SGD:S000005658"/>
<dbReference type="SGD" id="S000005658">
    <property type="gene designation" value="VPS17"/>
</dbReference>
<dbReference type="VEuPathDB" id="FungiDB:YOR132W"/>
<dbReference type="eggNOG" id="KOG2273">
    <property type="taxonomic scope" value="Eukaryota"/>
</dbReference>
<dbReference type="HOGENOM" id="CLU_028982_1_0_1"/>
<dbReference type="InParanoid" id="P32913"/>
<dbReference type="OMA" id="FYLGTME"/>
<dbReference type="OrthoDB" id="9976382at2759"/>
<dbReference type="BioCyc" id="YEAST:G3O-33656-MONOMER"/>
<dbReference type="BioGRID-ORCS" id="854300">
    <property type="hits" value="8 hits in 10 CRISPR screens"/>
</dbReference>
<dbReference type="PRO" id="PR:P32913"/>
<dbReference type="Proteomes" id="UP000002311">
    <property type="component" value="Chromosome XV"/>
</dbReference>
<dbReference type="RNAct" id="P32913">
    <property type="molecule type" value="protein"/>
</dbReference>
<dbReference type="GO" id="GO:0005829">
    <property type="term" value="C:cytosol"/>
    <property type="evidence" value="ECO:0007669"/>
    <property type="project" value="GOC"/>
</dbReference>
<dbReference type="GO" id="GO:0012505">
    <property type="term" value="C:endomembrane system"/>
    <property type="evidence" value="ECO:0000303"/>
    <property type="project" value="ComplexPortal"/>
</dbReference>
<dbReference type="GO" id="GO:0005768">
    <property type="term" value="C:endosome"/>
    <property type="evidence" value="ECO:0000353"/>
    <property type="project" value="SGD"/>
</dbReference>
<dbReference type="GO" id="GO:0030904">
    <property type="term" value="C:retromer complex"/>
    <property type="evidence" value="ECO:0000315"/>
    <property type="project" value="SGD"/>
</dbReference>
<dbReference type="GO" id="GO:0030905">
    <property type="term" value="C:retromer, tubulation complex"/>
    <property type="evidence" value="ECO:0000353"/>
    <property type="project" value="SGD"/>
</dbReference>
<dbReference type="GO" id="GO:0032266">
    <property type="term" value="F:phosphatidylinositol-3-phosphate binding"/>
    <property type="evidence" value="ECO:0000314"/>
    <property type="project" value="SGD"/>
</dbReference>
<dbReference type="GO" id="GO:0032456">
    <property type="term" value="P:endocytic recycling"/>
    <property type="evidence" value="ECO:0000303"/>
    <property type="project" value="ComplexPortal"/>
</dbReference>
<dbReference type="GO" id="GO:0006886">
    <property type="term" value="P:intracellular protein transport"/>
    <property type="evidence" value="ECO:0000318"/>
    <property type="project" value="GO_Central"/>
</dbReference>
<dbReference type="GO" id="GO:0042147">
    <property type="term" value="P:retrograde transport, endosome to Golgi"/>
    <property type="evidence" value="ECO:0000353"/>
    <property type="project" value="SGD"/>
</dbReference>
<dbReference type="CDD" id="cd07625">
    <property type="entry name" value="BAR_Vps17p"/>
    <property type="match status" value="1"/>
</dbReference>
<dbReference type="CDD" id="cd06891">
    <property type="entry name" value="PX_Vps17p"/>
    <property type="match status" value="1"/>
</dbReference>
<dbReference type="FunFam" id="1.20.1270.60:FF:000097">
    <property type="entry name" value="Vacuolar protein sorting-associated protein 17"/>
    <property type="match status" value="1"/>
</dbReference>
<dbReference type="FunFam" id="3.30.1520.10:FF:000034">
    <property type="entry name" value="Vacuolar protein sorting-associated protein 17"/>
    <property type="match status" value="1"/>
</dbReference>
<dbReference type="Gene3D" id="1.20.1270.60">
    <property type="entry name" value="Arfaptin homology (AH) domain/BAR domain"/>
    <property type="match status" value="1"/>
</dbReference>
<dbReference type="Gene3D" id="3.30.1520.10">
    <property type="entry name" value="Phox-like domain"/>
    <property type="match status" value="1"/>
</dbReference>
<dbReference type="InterPro" id="IPR027267">
    <property type="entry name" value="AH/BAR_dom_sf"/>
</dbReference>
<dbReference type="InterPro" id="IPR001683">
    <property type="entry name" value="PX_dom"/>
</dbReference>
<dbReference type="InterPro" id="IPR036871">
    <property type="entry name" value="PX_dom_sf"/>
</dbReference>
<dbReference type="InterPro" id="IPR014461">
    <property type="entry name" value="Retromer_complex_Vps17"/>
</dbReference>
<dbReference type="InterPro" id="IPR053055">
    <property type="entry name" value="VPS17"/>
</dbReference>
<dbReference type="InterPro" id="IPR037907">
    <property type="entry name" value="Vps17_PX"/>
</dbReference>
<dbReference type="PANTHER" id="PTHR47433">
    <property type="entry name" value="VACUOLAR PROTEIN SORTING-ASSOCIATED PROTEIN 17"/>
    <property type="match status" value="1"/>
</dbReference>
<dbReference type="PANTHER" id="PTHR47433:SF1">
    <property type="entry name" value="VACUOLAR PROTEIN SORTING-ASSOCIATED PROTEIN 17"/>
    <property type="match status" value="1"/>
</dbReference>
<dbReference type="Pfam" id="PF00787">
    <property type="entry name" value="PX"/>
    <property type="match status" value="1"/>
</dbReference>
<dbReference type="PIRSF" id="PIRSF011791">
    <property type="entry name" value="Vps17"/>
    <property type="match status" value="1"/>
</dbReference>
<dbReference type="SMART" id="SM00312">
    <property type="entry name" value="PX"/>
    <property type="match status" value="1"/>
</dbReference>
<dbReference type="SUPFAM" id="SSF64268">
    <property type="entry name" value="PX domain"/>
    <property type="match status" value="1"/>
</dbReference>
<name>VPS17_YEAST</name>
<sequence>MTSAVPYDPYDDLDNNPFAEPQEEDSEPAATTTDGSSSMSEERVGTEQTAASVQDNGTANNIQNGLGEEGNATRSKTSNEHNENQQPSQPSERVILPERSDEKKKYTLLAKVTGLERFGSATGKKENPTIIFDCSTNLPTFRKQQYKNVKKSYEEFHQLFKYLNVAIQESFVPTLPSAYTTFGINSEEDRMKVTRNFQLWFNRLSQDPLIIRNEEVAFFIESDFNTYTPINKSKSLASGLKRKTLKQLAPPYDEITELAEFRPLVKSIYVVSQSLQEKLLRVSRNRKMMVQEENAFGQDFVNLDEHNKLYRRYGKILTAVGDIDSIIATMDMATLYDGLEWIVRDAYAVKEALTNRHFIMRNLVQAQQNSKAKQEQARRFRSRRDINPMKIDEALRQLKAAAKNEQVLTLKLQRITSNMIIERKQWISWYEEWIRSSIKEFTLRKIEYERKKLTLLERVRSDIRKADENGGLSRLGRHAVSNNNSDTSQTLKGDSWTGESNRKSQIPINKIAHTEFDDELFTEDDGYNSQDSDTTSLNARHAASLLGMSTK</sequence>
<reference key="1">
    <citation type="journal article" date="1993" name="J. Biol. Chem.">
        <title>The yeast VPS17 gene encodes a membrane-associated protein required for the sorting of soluble vacuolar hydrolases.</title>
        <authorList>
            <person name="Koehrer K."/>
            <person name="Emr S.D."/>
        </authorList>
    </citation>
    <scope>NUCLEOTIDE SEQUENCE [GENOMIC DNA]</scope>
    <scope>FUNCTION</scope>
    <scope>DISRUPTION PHENOTYPE</scope>
    <scope>SUBCELLULAR LOCATION</scope>
</reference>
<reference key="2">
    <citation type="journal article" date="1996" name="Yeast">
        <title>Sequencing and analysis of 51 kb on the right arm of chromosome XV from Saccharomyces cerevisiae reveals 30 open reading frames.</title>
        <authorList>
            <person name="Wiemann S."/>
            <person name="Rechmann S."/>
            <person name="Benes V."/>
            <person name="Voss H."/>
            <person name="Schwager C."/>
            <person name="Vlcek C."/>
            <person name="Stegemann J."/>
            <person name="Zimmermann J."/>
            <person name="Erfle H."/>
            <person name="Paces V."/>
            <person name="Ansorge W."/>
        </authorList>
    </citation>
    <scope>NUCLEOTIDE SEQUENCE [GENOMIC DNA]</scope>
    <source>
        <strain>ATCC 96604 / S288c / FY1679</strain>
    </source>
</reference>
<reference key="3">
    <citation type="journal article" date="1997" name="Yeast">
        <title>DNA sequencing and analysis of 130 kb from yeast chromosome XV.</title>
        <authorList>
            <person name="Voss H."/>
            <person name="Benes V."/>
            <person name="Andrade M.A."/>
            <person name="Valencia A."/>
            <person name="Rechmann S."/>
            <person name="Teodoru C."/>
            <person name="Schwager C."/>
            <person name="Paces V."/>
            <person name="Sander C."/>
            <person name="Ansorge W."/>
        </authorList>
    </citation>
    <scope>NUCLEOTIDE SEQUENCE [GENOMIC DNA]</scope>
</reference>
<reference key="4">
    <citation type="journal article" date="1997" name="Nature">
        <title>The nucleotide sequence of Saccharomyces cerevisiae chromosome XV.</title>
        <authorList>
            <person name="Dujon B."/>
            <person name="Albermann K."/>
            <person name="Aldea M."/>
            <person name="Alexandraki D."/>
            <person name="Ansorge W."/>
            <person name="Arino J."/>
            <person name="Benes V."/>
            <person name="Bohn C."/>
            <person name="Bolotin-Fukuhara M."/>
            <person name="Bordonne R."/>
            <person name="Boyer J."/>
            <person name="Camasses A."/>
            <person name="Casamayor A."/>
            <person name="Casas C."/>
            <person name="Cheret G."/>
            <person name="Cziepluch C."/>
            <person name="Daignan-Fornier B."/>
            <person name="Dang V.-D."/>
            <person name="de Haan M."/>
            <person name="Delius H."/>
            <person name="Durand P."/>
            <person name="Fairhead C."/>
            <person name="Feldmann H."/>
            <person name="Gaillon L."/>
            <person name="Galisson F."/>
            <person name="Gamo F.-J."/>
            <person name="Gancedo C."/>
            <person name="Goffeau A."/>
            <person name="Goulding S.E."/>
            <person name="Grivell L.A."/>
            <person name="Habbig B."/>
            <person name="Hand N.J."/>
            <person name="Hani J."/>
            <person name="Hattenhorst U."/>
            <person name="Hebling U."/>
            <person name="Hernando Y."/>
            <person name="Herrero E."/>
            <person name="Heumann K."/>
            <person name="Hiesel R."/>
            <person name="Hilger F."/>
            <person name="Hofmann B."/>
            <person name="Hollenberg C.P."/>
            <person name="Hughes B."/>
            <person name="Jauniaux J.-C."/>
            <person name="Kalogeropoulos A."/>
            <person name="Katsoulou C."/>
            <person name="Kordes E."/>
            <person name="Lafuente M.J."/>
            <person name="Landt O."/>
            <person name="Louis E.J."/>
            <person name="Maarse A.C."/>
            <person name="Madania A."/>
            <person name="Mannhaupt G."/>
            <person name="Marck C."/>
            <person name="Martin R.P."/>
            <person name="Mewes H.-W."/>
            <person name="Michaux G."/>
            <person name="Paces V."/>
            <person name="Parle-McDermott A.G."/>
            <person name="Pearson B.M."/>
            <person name="Perrin A."/>
            <person name="Pettersson B."/>
            <person name="Poch O."/>
            <person name="Pohl T.M."/>
            <person name="Poirey R."/>
            <person name="Portetelle D."/>
            <person name="Pujol A."/>
            <person name="Purnelle B."/>
            <person name="Ramezani Rad M."/>
            <person name="Rechmann S."/>
            <person name="Schwager C."/>
            <person name="Schweizer M."/>
            <person name="Sor F."/>
            <person name="Sterky F."/>
            <person name="Tarassov I.A."/>
            <person name="Teodoru C."/>
            <person name="Tettelin H."/>
            <person name="Thierry A."/>
            <person name="Tobiasch E."/>
            <person name="Tzermia M."/>
            <person name="Uhlen M."/>
            <person name="Unseld M."/>
            <person name="Valens M."/>
            <person name="Vandenbol M."/>
            <person name="Vetter I."/>
            <person name="Vlcek C."/>
            <person name="Voet M."/>
            <person name="Volckaert G."/>
            <person name="Voss H."/>
            <person name="Wambutt R."/>
            <person name="Wedler H."/>
            <person name="Wiemann S."/>
            <person name="Winsor B."/>
            <person name="Wolfe K.H."/>
            <person name="Zollner A."/>
            <person name="Zumstein E."/>
            <person name="Kleine K."/>
        </authorList>
    </citation>
    <scope>NUCLEOTIDE SEQUENCE [LARGE SCALE GENOMIC DNA]</scope>
    <source>
        <strain>ATCC 204508 / S288c</strain>
    </source>
</reference>
<reference key="5">
    <citation type="journal article" date="2014" name="G3 (Bethesda)">
        <title>The reference genome sequence of Saccharomyces cerevisiae: Then and now.</title>
        <authorList>
            <person name="Engel S.R."/>
            <person name="Dietrich F.S."/>
            <person name="Fisk D.G."/>
            <person name="Binkley G."/>
            <person name="Balakrishnan R."/>
            <person name="Costanzo M.C."/>
            <person name="Dwight S.S."/>
            <person name="Hitz B.C."/>
            <person name="Karra K."/>
            <person name="Nash R.S."/>
            <person name="Weng S."/>
            <person name="Wong E.D."/>
            <person name="Lloyd P."/>
            <person name="Skrzypek M.S."/>
            <person name="Miyasato S.R."/>
            <person name="Simison M."/>
            <person name="Cherry J.M."/>
        </authorList>
    </citation>
    <scope>GENOME REANNOTATION</scope>
    <source>
        <strain>ATCC 204508 / S288c</strain>
    </source>
</reference>
<reference key="6">
    <citation type="journal article" date="1986" name="Proc. Natl. Acad. Sci. U.S.A.">
        <title>Isolation of yeast mutants defective in protein targeting to the vacuole.</title>
        <authorList>
            <person name="Bankaitis V.A."/>
            <person name="Johnson L.M."/>
            <person name="Emr S.D."/>
        </authorList>
    </citation>
    <scope>FUNCTION</scope>
</reference>
<reference key="7">
    <citation type="journal article" date="1988" name="Mol. Cell. Biol.">
        <title>Protein sorting in Saccharomyces cerevisiae: isolation of mutants defective in the delivery and processing of multiple vacuolar hydrolases.</title>
        <authorList>
            <person name="Robinson J.S."/>
            <person name="Klionsky D.J."/>
            <person name="Banta L.M."/>
            <person name="Emr S.D."/>
        </authorList>
    </citation>
    <scope>FUNCTION</scope>
</reference>
<reference key="8">
    <citation type="journal article" date="1997" name="Mol. Biol. Cell">
        <title>A sorting nexin-1 homologue, Vps5p, forms a complex with Vps17p and is required for recycling the vacuolar protein-sorting receptor.</title>
        <authorList>
            <person name="Horazdovsky B.F."/>
            <person name="Davies B.A."/>
            <person name="Seaman M.N.J."/>
            <person name="McLaughlin S.A."/>
            <person name="Yoon S."/>
            <person name="Emr S.D."/>
        </authorList>
    </citation>
    <scope>FUNCTION</scope>
    <scope>INTERACTION WITH VPS5</scope>
</reference>
<reference key="9">
    <citation type="journal article" date="1998" name="J. Cell Biol.">
        <title>A membrane coat complex essential for endosome-to-Golgi retrograde transport in yeast.</title>
        <authorList>
            <person name="Seaman M.N."/>
            <person name="McCaffery J.M."/>
            <person name="Emr S.D."/>
        </authorList>
    </citation>
    <scope>IDENTIFICATION IN THE RETROMER COMPLEX</scope>
    <scope>FUNCTION</scope>
    <scope>SUBCELLULAR LOCATION</scope>
</reference>
<reference key="10">
    <citation type="journal article" date="2002" name="Mol. Biol. Cell">
        <title>Identification of the functional domains of yeast sorting nexins Vps5p and Vps17p.</title>
        <authorList>
            <person name="Seaman M.N."/>
            <person name="Williams H.P."/>
        </authorList>
    </citation>
    <scope>FUNCTION</scope>
    <scope>DOMAIN</scope>
    <scope>INTERACTION WITH VPS5</scope>
</reference>
<reference key="11">
    <citation type="journal article" date="2003" name="Nature">
        <title>Global analysis of protein expression in yeast.</title>
        <authorList>
            <person name="Ghaemmaghami S."/>
            <person name="Huh W.-K."/>
            <person name="Bower K."/>
            <person name="Howson R.W."/>
            <person name="Belle A."/>
            <person name="Dephoure N."/>
            <person name="O'Shea E.K."/>
            <person name="Weissman J.S."/>
        </authorList>
    </citation>
    <scope>LEVEL OF PROTEIN EXPRESSION [LARGE SCALE ANALYSIS]</scope>
</reference>
<reference key="12">
    <citation type="journal article" date="2008" name="Mol. Cell. Proteomics">
        <title>A multidimensional chromatography technology for in-depth phosphoproteome analysis.</title>
        <authorList>
            <person name="Albuquerque C.P."/>
            <person name="Smolka M.B."/>
            <person name="Payne S.H."/>
            <person name="Bafna V."/>
            <person name="Eng J."/>
            <person name="Zhou H."/>
        </authorList>
    </citation>
    <scope>PHOSPHORYLATION [LARGE SCALE ANALYSIS] AT SER-544</scope>
    <scope>IDENTIFICATION BY MASS SPECTROMETRY [LARGE SCALE ANALYSIS]</scope>
</reference>
<reference key="13">
    <citation type="journal article" date="2009" name="Science">
        <title>Global analysis of Cdk1 substrate phosphorylation sites provides insights into evolution.</title>
        <authorList>
            <person name="Holt L.J."/>
            <person name="Tuch B.B."/>
            <person name="Villen J."/>
            <person name="Johnson A.D."/>
            <person name="Gygi S.P."/>
            <person name="Morgan D.O."/>
        </authorList>
    </citation>
    <scope>PHOSPHORYLATION [LARGE SCALE ANALYSIS] AT SER-544</scope>
    <scope>IDENTIFICATION BY MASS SPECTROMETRY [LARGE SCALE ANALYSIS]</scope>
</reference>
<reference key="14">
    <citation type="journal article" date="2023" name="Autophagy">
        <title>Vacuole fragmentation depends on a novel Atg18-containing retromer-complex.</title>
        <authorList>
            <person name="Marquardt L."/>
            <person name="Taylor M."/>
            <person name="Kramer F."/>
            <person name="Schmitt K."/>
            <person name="Braus G.H."/>
            <person name="Valerius O."/>
            <person name="Thumm M."/>
        </authorList>
    </citation>
    <scope>FUNCTION</scope>
    <scope>DISRUPTION PHENOTYPE</scope>
    <scope>SUBUNIT</scope>
</reference>
<reference evidence="18" key="15">
    <citation type="journal article" date="2022" name="Acta Crystallogr. F Struct. Biol. Commun.">
        <title>Crystal structure of the PX domain of Vps17p from Saccharomyces cerevisiae.</title>
        <authorList>
            <person name="Obita T."/>
            <person name="Inaka K."/>
            <person name="Kohda D."/>
            <person name="Maita N."/>
        </authorList>
    </citation>
    <scope>X-RAY CRYSTALLOGRAPHY (2.02 ANGSTROMS) OF 100-234</scope>
    <scope>DOMAIN</scope>
</reference>
<proteinExistence type="evidence at protein level"/>
<organism>
    <name type="scientific">Saccharomyces cerevisiae (strain ATCC 204508 / S288c)</name>
    <name type="common">Baker's yeast</name>
    <dbReference type="NCBI Taxonomy" id="559292"/>
    <lineage>
        <taxon>Eukaryota</taxon>
        <taxon>Fungi</taxon>
        <taxon>Dikarya</taxon>
        <taxon>Ascomycota</taxon>
        <taxon>Saccharomycotina</taxon>
        <taxon>Saccharomycetes</taxon>
        <taxon>Saccharomycetales</taxon>
        <taxon>Saccharomycetaceae</taxon>
        <taxon>Saccharomyces</taxon>
    </lineage>
</organism>